<feature type="chain" id="PRO_1000098280" description="3,4-dihydroxy-2-butanone 4-phosphate synthase">
    <location>
        <begin position="1"/>
        <end position="218"/>
    </location>
</feature>
<feature type="binding site" evidence="1">
    <location>
        <begin position="37"/>
        <end position="38"/>
    </location>
    <ligand>
        <name>D-ribulose 5-phosphate</name>
        <dbReference type="ChEBI" id="CHEBI:58121"/>
    </ligand>
</feature>
<feature type="binding site" evidence="1">
    <location>
        <position position="38"/>
    </location>
    <ligand>
        <name>Mg(2+)</name>
        <dbReference type="ChEBI" id="CHEBI:18420"/>
        <label>1</label>
    </ligand>
</feature>
<feature type="binding site" evidence="1">
    <location>
        <position position="38"/>
    </location>
    <ligand>
        <name>Mg(2+)</name>
        <dbReference type="ChEBI" id="CHEBI:18420"/>
        <label>2</label>
    </ligand>
</feature>
<feature type="binding site" evidence="1">
    <location>
        <position position="42"/>
    </location>
    <ligand>
        <name>D-ribulose 5-phosphate</name>
        <dbReference type="ChEBI" id="CHEBI:58121"/>
    </ligand>
</feature>
<feature type="binding site" evidence="1">
    <location>
        <begin position="150"/>
        <end position="154"/>
    </location>
    <ligand>
        <name>D-ribulose 5-phosphate</name>
        <dbReference type="ChEBI" id="CHEBI:58121"/>
    </ligand>
</feature>
<feature type="binding site" evidence="1">
    <location>
        <position position="153"/>
    </location>
    <ligand>
        <name>Mg(2+)</name>
        <dbReference type="ChEBI" id="CHEBI:18420"/>
        <label>2</label>
    </ligand>
</feature>
<feature type="binding site" evidence="1">
    <location>
        <position position="174"/>
    </location>
    <ligand>
        <name>D-ribulose 5-phosphate</name>
        <dbReference type="ChEBI" id="CHEBI:58121"/>
    </ligand>
</feature>
<feature type="site" description="Essential for catalytic activity" evidence="1">
    <location>
        <position position="136"/>
    </location>
</feature>
<feature type="site" description="Essential for catalytic activity" evidence="1">
    <location>
        <position position="174"/>
    </location>
</feature>
<reference key="1">
    <citation type="journal article" date="2008" name="Environ. Microbiol.">
        <title>The genome of Erwinia tasmaniensis strain Et1/99, a non-pathogenic bacterium in the genus Erwinia.</title>
        <authorList>
            <person name="Kube M."/>
            <person name="Migdoll A.M."/>
            <person name="Mueller I."/>
            <person name="Kuhl H."/>
            <person name="Beck A."/>
            <person name="Reinhardt R."/>
            <person name="Geider K."/>
        </authorList>
    </citation>
    <scope>NUCLEOTIDE SEQUENCE [LARGE SCALE GENOMIC DNA]</scope>
    <source>
        <strain>DSM 17950 / CFBP 7177 / CIP 109463 / NCPPB 4357 / Et1/99</strain>
    </source>
</reference>
<accession>B2VGK1</accession>
<comment type="function">
    <text evidence="1">Catalyzes the conversion of D-ribulose 5-phosphate to formate and 3,4-dihydroxy-2-butanone 4-phosphate.</text>
</comment>
<comment type="catalytic activity">
    <reaction evidence="1">
        <text>D-ribulose 5-phosphate = (2S)-2-hydroxy-3-oxobutyl phosphate + formate + H(+)</text>
        <dbReference type="Rhea" id="RHEA:18457"/>
        <dbReference type="ChEBI" id="CHEBI:15378"/>
        <dbReference type="ChEBI" id="CHEBI:15740"/>
        <dbReference type="ChEBI" id="CHEBI:58121"/>
        <dbReference type="ChEBI" id="CHEBI:58830"/>
        <dbReference type="EC" id="4.1.99.12"/>
    </reaction>
</comment>
<comment type="cofactor">
    <cofactor evidence="1">
        <name>Mg(2+)</name>
        <dbReference type="ChEBI" id="CHEBI:18420"/>
    </cofactor>
    <cofactor evidence="1">
        <name>Mn(2+)</name>
        <dbReference type="ChEBI" id="CHEBI:29035"/>
    </cofactor>
    <text evidence="1">Binds 2 divalent metal cations per subunit. Magnesium or manganese.</text>
</comment>
<comment type="pathway">
    <text evidence="1">Cofactor biosynthesis; riboflavin biosynthesis; 2-hydroxy-3-oxobutyl phosphate from D-ribulose 5-phosphate: step 1/1.</text>
</comment>
<comment type="subunit">
    <text evidence="1">Homodimer.</text>
</comment>
<comment type="similarity">
    <text evidence="1">Belongs to the DHBP synthase family.</text>
</comment>
<gene>
    <name evidence="1" type="primary">ribB</name>
    <name type="ordered locus">ETA_04280</name>
</gene>
<proteinExistence type="inferred from homology"/>
<organism>
    <name type="scientific">Erwinia tasmaniensis (strain DSM 17950 / CFBP 7177 / CIP 109463 / NCPPB 4357 / Et1/99)</name>
    <dbReference type="NCBI Taxonomy" id="465817"/>
    <lineage>
        <taxon>Bacteria</taxon>
        <taxon>Pseudomonadati</taxon>
        <taxon>Pseudomonadota</taxon>
        <taxon>Gammaproteobacteria</taxon>
        <taxon>Enterobacterales</taxon>
        <taxon>Erwiniaceae</taxon>
        <taxon>Erwinia</taxon>
    </lineage>
</organism>
<sequence>MNQSLLSEFGTPEQRVTHAIEALRAGRGVMVLDDEDRENEGDMIFAAETMTVEQMALTIRHGSGIVCLCLNEERLEQLDLPMMVQNNTSAYGTGFTVTIEAAEGVTTGVSATDRLTTIRAAIADDARPSDLNRPGHVFPLRARSGGVLTRGGHTEATLDLVTLAGFKPAGVLCELTNDDGSMAHAPEVIVFARQHDMPVVTIEDLVSYRRSRETLQAS</sequence>
<keyword id="KW-0456">Lyase</keyword>
<keyword id="KW-0460">Magnesium</keyword>
<keyword id="KW-0464">Manganese</keyword>
<keyword id="KW-0479">Metal-binding</keyword>
<keyword id="KW-1185">Reference proteome</keyword>
<keyword id="KW-0686">Riboflavin biosynthesis</keyword>
<dbReference type="EC" id="4.1.99.12" evidence="1"/>
<dbReference type="EMBL" id="CU468135">
    <property type="protein sequence ID" value="CAO95474.1"/>
    <property type="molecule type" value="Genomic_DNA"/>
</dbReference>
<dbReference type="RefSeq" id="WP_012440185.1">
    <property type="nucleotide sequence ID" value="NC_010694.1"/>
</dbReference>
<dbReference type="SMR" id="B2VGK1"/>
<dbReference type="STRING" id="465817.ETA_04280"/>
<dbReference type="KEGG" id="eta:ETA_04280"/>
<dbReference type="eggNOG" id="COG0108">
    <property type="taxonomic scope" value="Bacteria"/>
</dbReference>
<dbReference type="HOGENOM" id="CLU_020273_3_0_6"/>
<dbReference type="OrthoDB" id="9793111at2"/>
<dbReference type="UniPathway" id="UPA00275">
    <property type="reaction ID" value="UER00399"/>
</dbReference>
<dbReference type="Proteomes" id="UP000001726">
    <property type="component" value="Chromosome"/>
</dbReference>
<dbReference type="GO" id="GO:0005829">
    <property type="term" value="C:cytosol"/>
    <property type="evidence" value="ECO:0007669"/>
    <property type="project" value="TreeGrafter"/>
</dbReference>
<dbReference type="GO" id="GO:0008686">
    <property type="term" value="F:3,4-dihydroxy-2-butanone-4-phosphate synthase activity"/>
    <property type="evidence" value="ECO:0007669"/>
    <property type="project" value="UniProtKB-UniRule"/>
</dbReference>
<dbReference type="GO" id="GO:0000287">
    <property type="term" value="F:magnesium ion binding"/>
    <property type="evidence" value="ECO:0007669"/>
    <property type="project" value="UniProtKB-UniRule"/>
</dbReference>
<dbReference type="GO" id="GO:0030145">
    <property type="term" value="F:manganese ion binding"/>
    <property type="evidence" value="ECO:0007669"/>
    <property type="project" value="UniProtKB-UniRule"/>
</dbReference>
<dbReference type="GO" id="GO:0009231">
    <property type="term" value="P:riboflavin biosynthetic process"/>
    <property type="evidence" value="ECO:0007669"/>
    <property type="project" value="UniProtKB-UniRule"/>
</dbReference>
<dbReference type="FunFam" id="3.90.870.10:FF:000002">
    <property type="entry name" value="3,4-dihydroxy-2-butanone 4-phosphate synthase"/>
    <property type="match status" value="1"/>
</dbReference>
<dbReference type="Gene3D" id="3.90.870.10">
    <property type="entry name" value="DHBP synthase"/>
    <property type="match status" value="1"/>
</dbReference>
<dbReference type="HAMAP" id="MF_00180">
    <property type="entry name" value="RibB"/>
    <property type="match status" value="1"/>
</dbReference>
<dbReference type="InterPro" id="IPR017945">
    <property type="entry name" value="DHBP_synth_RibB-like_a/b_dom"/>
</dbReference>
<dbReference type="InterPro" id="IPR000422">
    <property type="entry name" value="DHBP_synthase_RibB"/>
</dbReference>
<dbReference type="NCBIfam" id="TIGR00506">
    <property type="entry name" value="ribB"/>
    <property type="match status" value="1"/>
</dbReference>
<dbReference type="PANTHER" id="PTHR21327:SF38">
    <property type="entry name" value="3,4-DIHYDROXY-2-BUTANONE 4-PHOSPHATE SYNTHASE"/>
    <property type="match status" value="1"/>
</dbReference>
<dbReference type="PANTHER" id="PTHR21327">
    <property type="entry name" value="GTP CYCLOHYDROLASE II-RELATED"/>
    <property type="match status" value="1"/>
</dbReference>
<dbReference type="Pfam" id="PF00926">
    <property type="entry name" value="DHBP_synthase"/>
    <property type="match status" value="1"/>
</dbReference>
<dbReference type="SUPFAM" id="SSF55821">
    <property type="entry name" value="YrdC/RibB"/>
    <property type="match status" value="1"/>
</dbReference>
<protein>
    <recommendedName>
        <fullName evidence="1">3,4-dihydroxy-2-butanone 4-phosphate synthase</fullName>
        <shortName evidence="1">DHBP synthase</shortName>
        <ecNumber evidence="1">4.1.99.12</ecNumber>
    </recommendedName>
</protein>
<evidence type="ECO:0000255" key="1">
    <source>
        <dbReference type="HAMAP-Rule" id="MF_00180"/>
    </source>
</evidence>
<name>RIBB_ERWT9</name>